<feature type="chain" id="PRO_0000361969" description="Deoxynucleoside triphosphate triphosphohydrolase SAMHD1">
    <location>
        <begin position="1"/>
        <end position="614"/>
    </location>
</feature>
<feature type="domain" description="SAM" evidence="3">
    <location>
        <begin position="37"/>
        <end position="102"/>
    </location>
</feature>
<feature type="domain" description="HD" evidence="4">
    <location>
        <begin position="155"/>
        <end position="307"/>
    </location>
</feature>
<feature type="region of interest" description="Disordered" evidence="5">
    <location>
        <begin position="1"/>
        <end position="33"/>
    </location>
</feature>
<feature type="compositionally biased region" description="Low complexity" evidence="5">
    <location>
        <begin position="1"/>
        <end position="13"/>
    </location>
</feature>
<feature type="active site" evidence="2">
    <location>
        <position position="224"/>
    </location>
</feature>
<feature type="binding site" description="in chain B" evidence="2">
    <location>
        <position position="107"/>
    </location>
    <ligand>
        <name>GTP</name>
        <dbReference type="ChEBI" id="CHEBI:37565"/>
        <note>allosteric activator; ligand shared between 3 neighboring subunits of the tetramer</note>
    </ligand>
</feature>
<feature type="binding site" description="in chain B" evidence="2">
    <location>
        <position position="108"/>
    </location>
    <ligand>
        <name>GTP</name>
        <dbReference type="ChEBI" id="CHEBI:37565"/>
        <note>allosteric activator; ligand shared between 3 neighboring subunits of the tetramer</note>
    </ligand>
</feature>
<feature type="binding site" description="in chain B" evidence="2">
    <location>
        <position position="110"/>
    </location>
    <ligand>
        <name>dGTP</name>
        <dbReference type="ChEBI" id="CHEBI:61429"/>
        <label>2</label>
        <note>allosteric activator; ligand shared between 3 neighboring subunits of the tetramer</note>
    </ligand>
</feature>
<feature type="binding site" description="in chain B" evidence="2">
    <location>
        <position position="128"/>
    </location>
    <ligand>
        <name>GTP</name>
        <dbReference type="ChEBI" id="CHEBI:37565"/>
        <note>allosteric activator; ligand shared between 3 neighboring subunits of the tetramer</note>
    </ligand>
</feature>
<feature type="binding site" description="in chain B" evidence="2">
    <location>
        <position position="133"/>
    </location>
    <ligand>
        <name>GTP</name>
        <dbReference type="ChEBI" id="CHEBI:37565"/>
        <note>allosteric activator; ligand shared between 3 neighboring subunits of the tetramer</note>
    </ligand>
</feature>
<feature type="binding site" description="in chain B" evidence="2">
    <location>
        <position position="136"/>
    </location>
    <ligand>
        <name>GTP</name>
        <dbReference type="ChEBI" id="CHEBI:37565"/>
        <note>allosteric activator; ligand shared between 3 neighboring subunits of the tetramer</note>
    </ligand>
</feature>
<feature type="binding site" evidence="2">
    <location>
        <position position="140"/>
    </location>
    <ligand>
        <name>dATP</name>
        <dbReference type="ChEBI" id="CHEBI:61404"/>
        <label>1</label>
        <note>substrate</note>
    </ligand>
</feature>
<feature type="binding site" evidence="2">
    <location>
        <position position="140"/>
    </location>
    <ligand>
        <name>dCTP</name>
        <dbReference type="ChEBI" id="CHEBI:61481"/>
        <label>1</label>
        <note>substrate</note>
    </ligand>
</feature>
<feature type="binding site" evidence="2">
    <location>
        <position position="140"/>
    </location>
    <ligand>
        <name>dGTP</name>
        <dbReference type="ChEBI" id="CHEBI:61429"/>
        <label>1</label>
        <note>substrate</note>
    </ligand>
</feature>
<feature type="binding site" evidence="2">
    <location>
        <position position="140"/>
    </location>
    <ligand>
        <name>dTTP</name>
        <dbReference type="ChEBI" id="CHEBI:37568"/>
        <label>1</label>
        <note>substrate</note>
    </ligand>
</feature>
<feature type="binding site" evidence="2">
    <location>
        <position position="141"/>
    </location>
    <ligand>
        <name>dGTP</name>
        <dbReference type="ChEBI" id="CHEBI:61429"/>
        <label>1</label>
        <note>substrate</note>
    </ligand>
</feature>
<feature type="binding site" description="in chain C" evidence="2">
    <location>
        <position position="147"/>
    </location>
    <ligand>
        <name>dGTP</name>
        <dbReference type="ChEBI" id="CHEBI:61429"/>
        <label>2</label>
        <note>allosteric activator; ligand shared between 3 neighboring subunits of the tetramer</note>
    </ligand>
</feature>
<feature type="binding site" evidence="2">
    <location>
        <position position="155"/>
    </location>
    <ligand>
        <name>dATP</name>
        <dbReference type="ChEBI" id="CHEBI:61404"/>
        <label>1</label>
        <note>substrate</note>
    </ligand>
</feature>
<feature type="binding site" evidence="2">
    <location>
        <position position="155"/>
    </location>
    <ligand>
        <name>dCTP</name>
        <dbReference type="ChEBI" id="CHEBI:61481"/>
        <label>1</label>
        <note>substrate</note>
    </ligand>
</feature>
<feature type="binding site" evidence="2">
    <location>
        <position position="155"/>
    </location>
    <ligand>
        <name>dGTP</name>
        <dbReference type="ChEBI" id="CHEBI:61429"/>
        <label>1</label>
        <note>substrate</note>
    </ligand>
</feature>
<feature type="binding site" evidence="2">
    <location>
        <position position="155"/>
    </location>
    <ligand>
        <name>dTTP</name>
        <dbReference type="ChEBI" id="CHEBI:37568"/>
        <label>1</label>
        <note>substrate</note>
    </ligand>
</feature>
<feature type="binding site" evidence="2">
    <location>
        <position position="158"/>
    </location>
    <ligand>
        <name>Mn(2+)</name>
        <dbReference type="ChEBI" id="CHEBI:29035"/>
    </ligand>
</feature>
<feature type="binding site" evidence="2">
    <location>
        <position position="197"/>
    </location>
    <ligand>
        <name>Mn(2+)</name>
        <dbReference type="ChEBI" id="CHEBI:29035"/>
    </ligand>
</feature>
<feature type="binding site" evidence="2">
    <location>
        <position position="198"/>
    </location>
    <ligand>
        <name>Mn(2+)</name>
        <dbReference type="ChEBI" id="CHEBI:29035"/>
    </ligand>
</feature>
<feature type="binding site" evidence="2">
    <location>
        <position position="201"/>
    </location>
    <ligand>
        <name>dATP</name>
        <dbReference type="ChEBI" id="CHEBI:61404"/>
        <label>1</label>
        <note>substrate</note>
    </ligand>
</feature>
<feature type="binding site" evidence="2">
    <location>
        <position position="201"/>
    </location>
    <ligand>
        <name>dCTP</name>
        <dbReference type="ChEBI" id="CHEBI:61481"/>
        <label>1</label>
        <note>substrate</note>
    </ligand>
</feature>
<feature type="binding site" evidence="2">
    <location>
        <position position="201"/>
    </location>
    <ligand>
        <name>dTTP</name>
        <dbReference type="ChEBI" id="CHEBI:37568"/>
        <label>1</label>
        <note>substrate</note>
    </ligand>
</feature>
<feature type="binding site" evidence="2">
    <location>
        <position position="206"/>
    </location>
    <ligand>
        <name>dATP</name>
        <dbReference type="ChEBI" id="CHEBI:61404"/>
        <label>1</label>
        <note>substrate</note>
    </ligand>
</feature>
<feature type="binding site" evidence="2">
    <location>
        <position position="206"/>
    </location>
    <ligand>
        <name>dCTP</name>
        <dbReference type="ChEBI" id="CHEBI:61481"/>
        <label>1</label>
        <note>substrate</note>
    </ligand>
</feature>
<feature type="binding site" evidence="2">
    <location>
        <position position="206"/>
    </location>
    <ligand>
        <name>dTTP</name>
        <dbReference type="ChEBI" id="CHEBI:37568"/>
        <label>1</label>
        <note>substrate</note>
    </ligand>
</feature>
<feature type="binding site" evidence="2">
    <location>
        <position position="302"/>
    </location>
    <ligand>
        <name>Mn(2+)</name>
        <dbReference type="ChEBI" id="CHEBI:29035"/>
    </ligand>
</feature>
<feature type="binding site" evidence="2">
    <location>
        <position position="303"/>
    </location>
    <ligand>
        <name>dATP</name>
        <dbReference type="ChEBI" id="CHEBI:61404"/>
        <label>1</label>
        <note>substrate</note>
    </ligand>
</feature>
<feature type="binding site" evidence="2">
    <location>
        <position position="303"/>
    </location>
    <ligand>
        <name>dCTP</name>
        <dbReference type="ChEBI" id="CHEBI:61481"/>
        <label>1</label>
        <note>substrate</note>
    </ligand>
</feature>
<feature type="binding site" evidence="2">
    <location>
        <position position="303"/>
    </location>
    <ligand>
        <name>dGTP</name>
        <dbReference type="ChEBI" id="CHEBI:61429"/>
        <label>1</label>
        <note>substrate</note>
    </ligand>
</feature>
<feature type="binding site" evidence="2">
    <location>
        <position position="303"/>
    </location>
    <ligand>
        <name>dTTP</name>
        <dbReference type="ChEBI" id="CHEBI:37568"/>
        <label>1</label>
        <note>substrate</note>
    </ligand>
</feature>
<feature type="binding site" evidence="2">
    <location>
        <position position="306"/>
    </location>
    <ligand>
        <name>dATP</name>
        <dbReference type="ChEBI" id="CHEBI:61404"/>
        <label>1</label>
        <note>substrate</note>
    </ligand>
</feature>
<feature type="binding site" evidence="2">
    <location>
        <position position="306"/>
    </location>
    <ligand>
        <name>dCTP</name>
        <dbReference type="ChEBI" id="CHEBI:61481"/>
        <label>1</label>
        <note>substrate</note>
    </ligand>
</feature>
<feature type="binding site" evidence="2">
    <location>
        <position position="306"/>
    </location>
    <ligand>
        <name>dGTP</name>
        <dbReference type="ChEBI" id="CHEBI:61429"/>
        <label>1</label>
        <note>substrate</note>
    </ligand>
</feature>
<feature type="binding site" evidence="2">
    <location>
        <position position="306"/>
    </location>
    <ligand>
        <name>dTTP</name>
        <dbReference type="ChEBI" id="CHEBI:37568"/>
        <label>1</label>
        <note>substrate</note>
    </ligand>
</feature>
<feature type="binding site" evidence="2">
    <location>
        <position position="310"/>
    </location>
    <ligand>
        <name>dATP</name>
        <dbReference type="ChEBI" id="CHEBI:61404"/>
        <label>1</label>
        <note>substrate</note>
    </ligand>
</feature>
<feature type="binding site" evidence="2">
    <location>
        <position position="310"/>
    </location>
    <ligand>
        <name>dCTP</name>
        <dbReference type="ChEBI" id="CHEBI:61481"/>
        <label>1</label>
        <note>substrate</note>
    </ligand>
</feature>
<feature type="binding site" evidence="2">
    <location>
        <position position="310"/>
    </location>
    <ligand>
        <name>dGTP</name>
        <dbReference type="ChEBI" id="CHEBI:61429"/>
        <label>1</label>
        <note>substrate</note>
    </ligand>
</feature>
<feature type="binding site" evidence="2">
    <location>
        <position position="310"/>
    </location>
    <ligand>
        <name>dTTP</name>
        <dbReference type="ChEBI" id="CHEBI:37568"/>
        <label>1</label>
        <note>substrate</note>
    </ligand>
</feature>
<feature type="binding site" description="in chain A" evidence="2">
    <location>
        <position position="324"/>
    </location>
    <ligand>
        <name>dGTP</name>
        <dbReference type="ChEBI" id="CHEBI:61429"/>
        <label>2</label>
        <note>allosteric activator; ligand shared between 3 neighboring subunits of the tetramer</note>
    </ligand>
</feature>
<feature type="binding site" description="in chain A" evidence="2">
    <location>
        <position position="343"/>
    </location>
    <ligand>
        <name>dGTP</name>
        <dbReference type="ChEBI" id="CHEBI:61429"/>
        <label>2</label>
        <note>allosteric activator; ligand shared between 3 neighboring subunits of the tetramer</note>
    </ligand>
</feature>
<feature type="binding site" description="in chain A" evidence="2">
    <location>
        <position position="345"/>
    </location>
    <ligand>
        <name>dGTP</name>
        <dbReference type="ChEBI" id="CHEBI:61429"/>
        <label>2</label>
        <note>allosteric activator; ligand shared between 3 neighboring subunits of the tetramer</note>
    </ligand>
</feature>
<feature type="binding site" description="in chain A" evidence="2">
    <location>
        <position position="349"/>
    </location>
    <ligand>
        <name>dGTP</name>
        <dbReference type="ChEBI" id="CHEBI:61429"/>
        <label>2</label>
        <note>allosteric activator; ligand shared between 3 neighboring subunits of the tetramer</note>
    </ligand>
</feature>
<feature type="binding site" evidence="2">
    <location>
        <position position="357"/>
    </location>
    <ligand>
        <name>dATP</name>
        <dbReference type="ChEBI" id="CHEBI:61404"/>
        <label>1</label>
        <note>substrate</note>
    </ligand>
</feature>
<feature type="binding site" evidence="2">
    <location>
        <position position="357"/>
    </location>
    <ligand>
        <name>dCTP</name>
        <dbReference type="ChEBI" id="CHEBI:61481"/>
        <label>1</label>
        <note>substrate</note>
    </ligand>
</feature>
<feature type="binding site" evidence="2">
    <location>
        <position position="357"/>
    </location>
    <ligand>
        <name>dGTP</name>
        <dbReference type="ChEBI" id="CHEBI:61429"/>
        <label>1</label>
        <note>substrate</note>
    </ligand>
</feature>
<feature type="binding site" evidence="2">
    <location>
        <position position="365"/>
    </location>
    <ligand>
        <name>dGTP</name>
        <dbReference type="ChEBI" id="CHEBI:61429"/>
        <label>1</label>
        <note>substrate</note>
    </ligand>
</feature>
<feature type="binding site" evidence="2">
    <location>
        <position position="366"/>
    </location>
    <ligand>
        <name>dATP</name>
        <dbReference type="ChEBI" id="CHEBI:61404"/>
        <label>1</label>
        <note>substrate</note>
    </ligand>
</feature>
<feature type="binding site" evidence="2">
    <location>
        <position position="366"/>
    </location>
    <ligand>
        <name>dCTP</name>
        <dbReference type="ChEBI" id="CHEBI:61481"/>
        <label>1</label>
        <note>substrate</note>
    </ligand>
</feature>
<feature type="binding site" evidence="2">
    <location>
        <position position="366"/>
    </location>
    <ligand>
        <name>dGTP</name>
        <dbReference type="ChEBI" id="CHEBI:61429"/>
        <label>1</label>
        <note>substrate</note>
    </ligand>
</feature>
<feature type="binding site" evidence="2">
    <location>
        <position position="366"/>
    </location>
    <ligand>
        <name>dTTP</name>
        <dbReference type="ChEBI" id="CHEBI:37568"/>
        <label>1</label>
        <note>substrate</note>
    </ligand>
</feature>
<feature type="binding site" description="in chain C" evidence="2">
    <location>
        <position position="367"/>
    </location>
    <ligand>
        <name>dGTP</name>
        <dbReference type="ChEBI" id="CHEBI:61429"/>
        <label>2</label>
        <note>allosteric activator; ligand shared between 3 neighboring subunits of the tetramer</note>
    </ligand>
</feature>
<feature type="binding site" description="in chain C" evidence="2">
    <location>
        <position position="368"/>
    </location>
    <ligand>
        <name>dGTP</name>
        <dbReference type="ChEBI" id="CHEBI:61429"/>
        <label>2</label>
        <note>allosteric activator; ligand shared between 3 neighboring subunits of the tetramer</note>
    </ligand>
</feature>
<feature type="binding site" description="in chain C" evidence="2">
    <location>
        <position position="442"/>
    </location>
    <ligand>
        <name>GTP</name>
        <dbReference type="ChEBI" id="CHEBI:37565"/>
        <note>allosteric activator; ligand shared between 3 neighboring subunits of the tetramer</note>
    </ligand>
</feature>
<feature type="binding site" description="in chain C" evidence="2">
    <location>
        <position position="446"/>
    </location>
    <ligand>
        <name>GTP</name>
        <dbReference type="ChEBI" id="CHEBI:37565"/>
        <note>allosteric activator; ligand shared between 3 neighboring subunits of the tetramer</note>
    </ligand>
</feature>
<feature type="binding site" description="in chain A" evidence="2">
    <location>
        <position position="515"/>
    </location>
    <ligand>
        <name>dGTP</name>
        <dbReference type="ChEBI" id="CHEBI:61429"/>
        <label>2</label>
        <note>allosteric activator; ligand shared between 3 neighboring subunits of the tetramer</note>
    </ligand>
</feature>
<feature type="binding site" description="in chain A" evidence="2">
    <location>
        <position position="515"/>
    </location>
    <ligand>
        <name>GTP</name>
        <dbReference type="ChEBI" id="CHEBI:37565"/>
        <note>allosteric activator; ligand shared between 3 neighboring subunits of the tetramer</note>
    </ligand>
</feature>
<feature type="sequence conflict" description="In Ref. 1; CAG32074." ref="1">
    <original>K</original>
    <variation>E</variation>
    <location>
        <position position="91"/>
    </location>
</feature>
<feature type="sequence conflict" description="In Ref. 1; CAG32074." ref="1">
    <original>I</original>
    <variation>V</variation>
    <location>
        <position position="524"/>
    </location>
</feature>
<name>SAMH1_CHICK</name>
<comment type="function">
    <text evidence="2">Protein that acts both as a host restriction factor involved in defense response to virus and as a regulator of DNA end resection at stalled replication forks. Has deoxynucleoside triphosphate (dNTPase) activity, which is required to restrict infection by viruses: dNTPase activity reduces cellular dNTP levels to levels too low for retroviral reverse transcription to occur, blocking early-stage virus replication in dendritic and other myeloid cells. Functions during S phase at stalled DNA replication forks to promote the resection of gapped or reversed forks: acts by stimulating the exonuclease activity of MRE11, activating the ATR-CHK1 pathway and allowing the forks to restart replication. Its ability to promote degradation of nascent DNA at stalled replication forks is required to prevent induction of type I interferons, thereby preventing chronic inflammation. Ability to promote DNA end resection at stalled replication forks is independent of dNTPase activity.</text>
</comment>
<comment type="catalytic activity">
    <reaction evidence="2">
        <text>a 2'-deoxyribonucleoside 5'-triphosphate + H2O = a 2'-deoxyribonucleoside + triphosphate + H(+)</text>
        <dbReference type="Rhea" id="RHEA:46148"/>
        <dbReference type="ChEBI" id="CHEBI:15377"/>
        <dbReference type="ChEBI" id="CHEBI:15378"/>
        <dbReference type="ChEBI" id="CHEBI:18036"/>
        <dbReference type="ChEBI" id="CHEBI:18274"/>
        <dbReference type="ChEBI" id="CHEBI:61560"/>
    </reaction>
    <physiologicalReaction direction="left-to-right" evidence="2">
        <dbReference type="Rhea" id="RHEA:46149"/>
    </physiologicalReaction>
</comment>
<comment type="catalytic activity">
    <reaction evidence="2">
        <text>dATP + H2O = 2'-deoxyadenosine + triphosphate + H(+)</text>
        <dbReference type="Rhea" id="RHEA:67648"/>
        <dbReference type="ChEBI" id="CHEBI:15377"/>
        <dbReference type="ChEBI" id="CHEBI:15378"/>
        <dbReference type="ChEBI" id="CHEBI:17256"/>
        <dbReference type="ChEBI" id="CHEBI:18036"/>
        <dbReference type="ChEBI" id="CHEBI:61404"/>
    </reaction>
    <physiologicalReaction direction="left-to-right" evidence="2">
        <dbReference type="Rhea" id="RHEA:67649"/>
    </physiologicalReaction>
</comment>
<comment type="catalytic activity">
    <reaction evidence="2">
        <text>dCTP + H2O = 2'-deoxycytidine + triphosphate + H(+)</text>
        <dbReference type="Rhea" id="RHEA:80083"/>
        <dbReference type="ChEBI" id="CHEBI:15377"/>
        <dbReference type="ChEBI" id="CHEBI:15378"/>
        <dbReference type="ChEBI" id="CHEBI:15698"/>
        <dbReference type="ChEBI" id="CHEBI:18036"/>
        <dbReference type="ChEBI" id="CHEBI:61481"/>
    </reaction>
    <physiologicalReaction direction="left-to-right" evidence="2">
        <dbReference type="Rhea" id="RHEA:80084"/>
    </physiologicalReaction>
</comment>
<comment type="catalytic activity">
    <reaction evidence="2">
        <text>dGTP + H2O = 2'-deoxyguanosine + triphosphate + H(+)</text>
        <dbReference type="Rhea" id="RHEA:15193"/>
        <dbReference type="ChEBI" id="CHEBI:15377"/>
        <dbReference type="ChEBI" id="CHEBI:15378"/>
        <dbReference type="ChEBI" id="CHEBI:17172"/>
        <dbReference type="ChEBI" id="CHEBI:18036"/>
        <dbReference type="ChEBI" id="CHEBI:61429"/>
    </reaction>
    <physiologicalReaction direction="left-to-right" evidence="2">
        <dbReference type="Rhea" id="RHEA:15194"/>
    </physiologicalReaction>
</comment>
<comment type="catalytic activity">
    <reaction evidence="2">
        <text>dTTP + H2O = thymidine + triphosphate + H(+)</text>
        <dbReference type="Rhea" id="RHEA:80079"/>
        <dbReference type="ChEBI" id="CHEBI:15377"/>
        <dbReference type="ChEBI" id="CHEBI:15378"/>
        <dbReference type="ChEBI" id="CHEBI:17748"/>
        <dbReference type="ChEBI" id="CHEBI:18036"/>
        <dbReference type="ChEBI" id="CHEBI:37568"/>
    </reaction>
    <physiologicalReaction direction="left-to-right" evidence="2">
        <dbReference type="Rhea" id="RHEA:80080"/>
    </physiologicalReaction>
</comment>
<comment type="cofactor">
    <cofactor evidence="2">
        <name>Zn(2+)</name>
        <dbReference type="ChEBI" id="CHEBI:29105"/>
    </cofactor>
    <text evidence="2">Binds 1 zinc ion per subunit.</text>
</comment>
<comment type="activity regulation">
    <text evidence="2">Allosterically activated and regulated via the combined actions of GTP and dNTPs (dATP, dGTP, dTTP and dCTP): Allosteric site 1 binds GTP, while allosteric site 2 binds dNTP. Allosteric activation promotes the formation of highly active homotetramers.</text>
</comment>
<comment type="subunit">
    <text evidence="1 2">Homodimer; in absence of GTP and dNTP. Homotetramer; in GTP- and dNTP-bound form (By similarity). Interacts with rbbp8/CtIP (By similarity).</text>
</comment>
<comment type="subcellular location">
    <subcellularLocation>
        <location evidence="2">Nucleus</location>
    </subcellularLocation>
    <subcellularLocation>
        <location evidence="2">Chromosome</location>
    </subcellularLocation>
    <text evidence="2">Localizes to sites of DNA double-strand breaks in response to DNA damage.</text>
</comment>
<comment type="similarity">
    <text evidence="7">Belongs to the SAMHD1 family.</text>
</comment>
<dbReference type="EC" id="3.1.5.-" evidence="2"/>
<dbReference type="EMBL" id="AADN04000418">
    <property type="status" value="NOT_ANNOTATED_CDS"/>
    <property type="molecule type" value="Genomic_DNA"/>
</dbReference>
<dbReference type="EMBL" id="AJ720415">
    <property type="protein sequence ID" value="CAG32074.1"/>
    <property type="molecule type" value="mRNA"/>
</dbReference>
<dbReference type="RefSeq" id="NP_001026016.2">
    <property type="nucleotide sequence ID" value="NM_001030845.2"/>
</dbReference>
<dbReference type="SMR" id="Q5ZJL9"/>
<dbReference type="BioGRID" id="680279">
    <property type="interactions" value="1"/>
</dbReference>
<dbReference type="FunCoup" id="Q5ZJL9">
    <property type="interactions" value="1609"/>
</dbReference>
<dbReference type="STRING" id="9031.ENSGALP00000001866"/>
<dbReference type="PaxDb" id="9031-ENSGALP00000001866"/>
<dbReference type="Ensembl" id="ENSGALT00010059587.1">
    <property type="protein sequence ID" value="ENSGALP00010036388.1"/>
    <property type="gene ID" value="ENSGALG00010024424.1"/>
</dbReference>
<dbReference type="GeneID" id="419125"/>
<dbReference type="KEGG" id="gga:419125"/>
<dbReference type="CTD" id="25939"/>
<dbReference type="VEuPathDB" id="HostDB:geneid_419125"/>
<dbReference type="eggNOG" id="KOG2681">
    <property type="taxonomic scope" value="Eukaryota"/>
</dbReference>
<dbReference type="GeneTree" id="ENSGT00390000013867"/>
<dbReference type="HOGENOM" id="CLU_026821_1_2_1"/>
<dbReference type="InParanoid" id="Q5ZJL9"/>
<dbReference type="OMA" id="QVHGYIK"/>
<dbReference type="OrthoDB" id="9991235at2759"/>
<dbReference type="PhylomeDB" id="Q5ZJL9"/>
<dbReference type="TreeFam" id="TF316113"/>
<dbReference type="Reactome" id="R-GGA-8956319">
    <property type="pathway name" value="Nucleotide catabolism"/>
</dbReference>
<dbReference type="PRO" id="PR:Q5ZJL9"/>
<dbReference type="Proteomes" id="UP000000539">
    <property type="component" value="Chromosome 20"/>
</dbReference>
<dbReference type="Bgee" id="ENSGALG00000001231">
    <property type="expression patterns" value="Expressed in lung and 14 other cell types or tissues"/>
</dbReference>
<dbReference type="GO" id="GO:0005634">
    <property type="term" value="C:nucleus"/>
    <property type="evidence" value="ECO:0000250"/>
    <property type="project" value="UniProtKB"/>
</dbReference>
<dbReference type="GO" id="GO:0035861">
    <property type="term" value="C:site of double-strand break"/>
    <property type="evidence" value="ECO:0000250"/>
    <property type="project" value="UniProtKB"/>
</dbReference>
<dbReference type="GO" id="GO:0106375">
    <property type="term" value="F:deoxynucleoside triphosphate hydrolase activity"/>
    <property type="evidence" value="ECO:0000250"/>
    <property type="project" value="UniProtKB"/>
</dbReference>
<dbReference type="GO" id="GO:0032567">
    <property type="term" value="F:dGTP binding"/>
    <property type="evidence" value="ECO:0000250"/>
    <property type="project" value="UniProtKB"/>
</dbReference>
<dbReference type="GO" id="GO:0008832">
    <property type="term" value="F:dGTPase activity"/>
    <property type="evidence" value="ECO:0000250"/>
    <property type="project" value="UniProtKB"/>
</dbReference>
<dbReference type="GO" id="GO:0005525">
    <property type="term" value="F:GTP binding"/>
    <property type="evidence" value="ECO:0007669"/>
    <property type="project" value="UniProtKB-KW"/>
</dbReference>
<dbReference type="GO" id="GO:0003676">
    <property type="term" value="F:nucleic acid binding"/>
    <property type="evidence" value="ECO:0000250"/>
    <property type="project" value="UniProtKB"/>
</dbReference>
<dbReference type="GO" id="GO:0003723">
    <property type="term" value="F:RNA binding"/>
    <property type="evidence" value="ECO:0000250"/>
    <property type="project" value="UniProtKB"/>
</dbReference>
<dbReference type="GO" id="GO:0003697">
    <property type="term" value="F:single-stranded DNA binding"/>
    <property type="evidence" value="ECO:0000250"/>
    <property type="project" value="UniProtKB"/>
</dbReference>
<dbReference type="GO" id="GO:0016793">
    <property type="term" value="F:triphosphoric monoester hydrolase activity"/>
    <property type="evidence" value="ECO:0000250"/>
    <property type="project" value="UniProtKB"/>
</dbReference>
<dbReference type="GO" id="GO:0008270">
    <property type="term" value="F:zinc ion binding"/>
    <property type="evidence" value="ECO:0000250"/>
    <property type="project" value="UniProtKB"/>
</dbReference>
<dbReference type="GO" id="GO:0046061">
    <property type="term" value="P:dATP catabolic process"/>
    <property type="evidence" value="ECO:0000250"/>
    <property type="project" value="UniProtKB"/>
</dbReference>
<dbReference type="GO" id="GO:0051607">
    <property type="term" value="P:defense response to virus"/>
    <property type="evidence" value="ECO:0000250"/>
    <property type="project" value="UniProtKB"/>
</dbReference>
<dbReference type="GO" id="GO:0009264">
    <property type="term" value="P:deoxyribonucleotide catabolic process"/>
    <property type="evidence" value="ECO:0000250"/>
    <property type="project" value="UniProtKB"/>
</dbReference>
<dbReference type="GO" id="GO:0006203">
    <property type="term" value="P:dGTP catabolic process"/>
    <property type="evidence" value="ECO:0000250"/>
    <property type="project" value="UniProtKB"/>
</dbReference>
<dbReference type="GO" id="GO:0006974">
    <property type="term" value="P:DNA damage response"/>
    <property type="evidence" value="ECO:0000250"/>
    <property type="project" value="UniProtKB"/>
</dbReference>
<dbReference type="GO" id="GO:0110025">
    <property type="term" value="P:DNA strand resection involved in replication fork processing"/>
    <property type="evidence" value="ECO:0000250"/>
    <property type="project" value="UniProtKB"/>
</dbReference>
<dbReference type="GO" id="GO:0000724">
    <property type="term" value="P:double-strand break repair via homologous recombination"/>
    <property type="evidence" value="ECO:0000250"/>
    <property type="project" value="UniProtKB"/>
</dbReference>
<dbReference type="GO" id="GO:0045087">
    <property type="term" value="P:innate immune response"/>
    <property type="evidence" value="ECO:0007669"/>
    <property type="project" value="UniProtKB-KW"/>
</dbReference>
<dbReference type="GO" id="GO:0060339">
    <property type="term" value="P:negative regulation of type I interferon-mediated signaling pathway"/>
    <property type="evidence" value="ECO:0000250"/>
    <property type="project" value="UniProtKB"/>
</dbReference>
<dbReference type="GO" id="GO:0051289">
    <property type="term" value="P:protein homotetramerization"/>
    <property type="evidence" value="ECO:0000250"/>
    <property type="project" value="UniProtKB"/>
</dbReference>
<dbReference type="GO" id="GO:0045088">
    <property type="term" value="P:regulation of innate immune response"/>
    <property type="evidence" value="ECO:0000250"/>
    <property type="project" value="UniProtKB"/>
</dbReference>
<dbReference type="GO" id="GO:0016446">
    <property type="term" value="P:somatic hypermutation of immunoglobulin genes"/>
    <property type="evidence" value="ECO:0000250"/>
    <property type="project" value="UniProtKB"/>
</dbReference>
<dbReference type="CDD" id="cd00077">
    <property type="entry name" value="HDc"/>
    <property type="match status" value="1"/>
</dbReference>
<dbReference type="CDD" id="cd09508">
    <property type="entry name" value="SAM_HD"/>
    <property type="match status" value="1"/>
</dbReference>
<dbReference type="FunFam" id="1.10.3210.10:FF:000015">
    <property type="entry name" value="Deoxynucleoside triphosphate triphosphohydrolase SAMHD1"/>
    <property type="match status" value="1"/>
</dbReference>
<dbReference type="FunFam" id="3.30.70.2760:FF:000002">
    <property type="entry name" value="SAM and HD domain-containing deoxynucleoside triphosphate triphosphohydrolase 1"/>
    <property type="match status" value="1"/>
</dbReference>
<dbReference type="Gene3D" id="3.30.70.2760">
    <property type="match status" value="1"/>
</dbReference>
<dbReference type="Gene3D" id="1.10.3210.10">
    <property type="entry name" value="Hypothetical protein af1432"/>
    <property type="match status" value="1"/>
</dbReference>
<dbReference type="InterPro" id="IPR050135">
    <property type="entry name" value="dGTPase-like"/>
</dbReference>
<dbReference type="InterPro" id="IPR003607">
    <property type="entry name" value="HD/PDEase_dom"/>
</dbReference>
<dbReference type="InterPro" id="IPR006674">
    <property type="entry name" value="HD_domain"/>
</dbReference>
<dbReference type="InterPro" id="IPR013761">
    <property type="entry name" value="SAM/pointed_sf"/>
</dbReference>
<dbReference type="PANTHER" id="PTHR11373">
    <property type="entry name" value="DEOXYNUCLEOSIDE TRIPHOSPHATE TRIPHOSPHOHYDROLASE"/>
    <property type="match status" value="1"/>
</dbReference>
<dbReference type="PANTHER" id="PTHR11373:SF4">
    <property type="entry name" value="DEOXYNUCLEOSIDE TRIPHOSPHATE TRIPHOSPHOHYDROLASE SAMHD1"/>
    <property type="match status" value="1"/>
</dbReference>
<dbReference type="Pfam" id="PF01966">
    <property type="entry name" value="HD"/>
    <property type="match status" value="1"/>
</dbReference>
<dbReference type="SMART" id="SM00471">
    <property type="entry name" value="HDc"/>
    <property type="match status" value="1"/>
</dbReference>
<dbReference type="SUPFAM" id="SSF109604">
    <property type="entry name" value="HD-domain/PDEase-like"/>
    <property type="match status" value="1"/>
</dbReference>
<dbReference type="SUPFAM" id="SSF47769">
    <property type="entry name" value="SAM/Pointed domain"/>
    <property type="match status" value="1"/>
</dbReference>
<dbReference type="PROSITE" id="PS51831">
    <property type="entry name" value="HD"/>
    <property type="match status" value="1"/>
</dbReference>
<organism>
    <name type="scientific">Gallus gallus</name>
    <name type="common">Chicken</name>
    <dbReference type="NCBI Taxonomy" id="9031"/>
    <lineage>
        <taxon>Eukaryota</taxon>
        <taxon>Metazoa</taxon>
        <taxon>Chordata</taxon>
        <taxon>Craniata</taxon>
        <taxon>Vertebrata</taxon>
        <taxon>Euteleostomi</taxon>
        <taxon>Archelosauria</taxon>
        <taxon>Archosauria</taxon>
        <taxon>Dinosauria</taxon>
        <taxon>Saurischia</taxon>
        <taxon>Theropoda</taxon>
        <taxon>Coelurosauria</taxon>
        <taxon>Aves</taxon>
        <taxon>Neognathae</taxon>
        <taxon>Galloanserae</taxon>
        <taxon>Galliformes</taxon>
        <taxon>Phasianidae</taxon>
        <taxon>Phasianinae</taxon>
        <taxon>Gallus</taxon>
    </lineage>
</organism>
<keyword id="KW-0021">Allosteric enzyme</keyword>
<keyword id="KW-0051">Antiviral defense</keyword>
<keyword id="KW-0158">Chromosome</keyword>
<keyword id="KW-0227">DNA damage</keyword>
<keyword id="KW-0234">DNA repair</keyword>
<keyword id="KW-0235">DNA replication</keyword>
<keyword id="KW-0342">GTP-binding</keyword>
<keyword id="KW-0378">Hydrolase</keyword>
<keyword id="KW-0391">Immunity</keyword>
<keyword id="KW-0399">Innate immunity</keyword>
<keyword id="KW-0464">Manganese</keyword>
<keyword id="KW-0479">Metal-binding</keyword>
<keyword id="KW-0547">Nucleotide-binding</keyword>
<keyword id="KW-0539">Nucleus</keyword>
<keyword id="KW-1185">Reference proteome</keyword>
<keyword id="KW-0862">Zinc</keyword>
<gene>
    <name evidence="2" type="primary">SAMHD1</name>
    <name evidence="6" type="ORF">RCJMB04_17d8</name>
</gene>
<sequence>MGSPAAGWGAAPAKRARREGSAESSCGSPADRDPRLWDTERLCQHLSRNGVGEPGLLRRFRESGVTGAMLLDLPACALRITHACLPDERLKVLACLNQLRQTADIMKVFNDPVHGHIEIHPLLVRIIDTPQFQRLRYIKQLGGTYFVFPGASHNRFEHSLGVGYLAGCLVRELKERQPELDITQRDILCVEIAGLCHDLGHGPFSHMFDGRFIPLARQGLNWKHETASVEMFEHLITSNKLEEIMESYGLILEEDIAFIKEQIGGPIDETACEESWPYRGRPKEKSFLYEIVANKKNGIDVDKWDYFARDCHHLGIQNNFDYRRLIKFTRVCEAGNQKHICARDKEVGNLYDMFHTRNCLHRRAYQHKVGNIIEIMITEAFQKADCFFQIEGSKGKLYHISTAMEDMEAYTKLTDNIYLEILHSSRPELSEAREILHKIERRELYKFLGETQPEKVNEIPKDEYDGLAGDIANSKPEKDPPDVELTAEDFIVDVVNMDYGMKDQNPIDNVLFYCKADPSKAIKISKEQVSRLLPGTFSEQVIRVYCKRQDPIIVSAAKQYFVQWCIKRDFTKPQDGDVVAPHLTPLKQSWNNRSKTEYTTASEPSCKQKLSFNK</sequence>
<accession>Q5ZJL9</accession>
<accession>F1P0T3</accession>
<evidence type="ECO:0000250" key="1">
    <source>
        <dbReference type="UniProtKB" id="Q6INN8"/>
    </source>
</evidence>
<evidence type="ECO:0000250" key="2">
    <source>
        <dbReference type="UniProtKB" id="Q9Y3Z3"/>
    </source>
</evidence>
<evidence type="ECO:0000255" key="3">
    <source>
        <dbReference type="PROSITE-ProRule" id="PRU00184"/>
    </source>
</evidence>
<evidence type="ECO:0000255" key="4">
    <source>
        <dbReference type="PROSITE-ProRule" id="PRU01175"/>
    </source>
</evidence>
<evidence type="ECO:0000256" key="5">
    <source>
        <dbReference type="SAM" id="MobiDB-lite"/>
    </source>
</evidence>
<evidence type="ECO:0000303" key="6">
    <source>
    </source>
</evidence>
<evidence type="ECO:0000305" key="7"/>
<proteinExistence type="evidence at transcript level"/>
<protein>
    <recommendedName>
        <fullName evidence="7">Deoxynucleoside triphosphate triphosphohydrolase SAMHD1</fullName>
        <shortName evidence="7">dNTPase</shortName>
        <ecNumber evidence="2">3.1.5.-</ecNumber>
    </recommendedName>
</protein>
<reference key="1">
    <citation type="journal article" date="2005" name="Genome Biol.">
        <title>Full-length cDNAs from chicken bursal lymphocytes to facilitate gene function analysis.</title>
        <authorList>
            <person name="Caldwell R.B."/>
            <person name="Kierzek A.M."/>
            <person name="Arakawa H."/>
            <person name="Bezzubov Y."/>
            <person name="Zaim J."/>
            <person name="Fiedler P."/>
            <person name="Kutter S."/>
            <person name="Blagodatski A."/>
            <person name="Kostovska D."/>
            <person name="Koter M."/>
            <person name="Plachy J."/>
            <person name="Carninci P."/>
            <person name="Hayashizaki Y."/>
            <person name="Buerstedde J.-M."/>
        </authorList>
    </citation>
    <scope>NUCLEOTIDE SEQUENCE [LARGE SCALE MRNA]</scope>
    <source>
        <strain>CB</strain>
        <tissue>Bursa of Fabricius</tissue>
    </source>
</reference>
<reference key="2">
    <citation type="journal article" date="2004" name="Nature">
        <title>Sequence and comparative analysis of the chicken genome provide unique perspectives on vertebrate evolution.</title>
        <authorList>
            <person name="Hillier L.W."/>
            <person name="Miller W."/>
            <person name="Birney E."/>
            <person name="Warren W."/>
            <person name="Hardison R.C."/>
            <person name="Ponting C.P."/>
            <person name="Bork P."/>
            <person name="Burt D.W."/>
            <person name="Groenen M.A.M."/>
            <person name="Delany M.E."/>
            <person name="Dodgson J.B."/>
            <person name="Chinwalla A.T."/>
            <person name="Cliften P.F."/>
            <person name="Clifton S.W."/>
            <person name="Delehaunty K.D."/>
            <person name="Fronick C."/>
            <person name="Fulton R.S."/>
            <person name="Graves T.A."/>
            <person name="Kremitzki C."/>
            <person name="Layman D."/>
            <person name="Magrini V."/>
            <person name="McPherson J.D."/>
            <person name="Miner T.L."/>
            <person name="Minx P."/>
            <person name="Nash W.E."/>
            <person name="Nhan M.N."/>
            <person name="Nelson J.O."/>
            <person name="Oddy L.G."/>
            <person name="Pohl C.S."/>
            <person name="Randall-Maher J."/>
            <person name="Smith S.M."/>
            <person name="Wallis J.W."/>
            <person name="Yang S.-P."/>
            <person name="Romanov M.N."/>
            <person name="Rondelli C.M."/>
            <person name="Paton B."/>
            <person name="Smith J."/>
            <person name="Morrice D."/>
            <person name="Daniels L."/>
            <person name="Tempest H.G."/>
            <person name="Robertson L."/>
            <person name="Masabanda J.S."/>
            <person name="Griffin D.K."/>
            <person name="Vignal A."/>
            <person name="Fillon V."/>
            <person name="Jacobbson L."/>
            <person name="Kerje S."/>
            <person name="Andersson L."/>
            <person name="Crooijmans R.P."/>
            <person name="Aerts J."/>
            <person name="van der Poel J.J."/>
            <person name="Ellegren H."/>
            <person name="Caldwell R.B."/>
            <person name="Hubbard S.J."/>
            <person name="Grafham D.V."/>
            <person name="Kierzek A.M."/>
            <person name="McLaren S.R."/>
            <person name="Overton I.M."/>
            <person name="Arakawa H."/>
            <person name="Beattie K.J."/>
            <person name="Bezzubov Y."/>
            <person name="Boardman P.E."/>
            <person name="Bonfield J.K."/>
            <person name="Croning M.D.R."/>
            <person name="Davies R.M."/>
            <person name="Francis M.D."/>
            <person name="Humphray S.J."/>
            <person name="Scott C.E."/>
            <person name="Taylor R.G."/>
            <person name="Tickle C."/>
            <person name="Brown W.R.A."/>
            <person name="Rogers J."/>
            <person name="Buerstedde J.-M."/>
            <person name="Wilson S.A."/>
            <person name="Stubbs L."/>
            <person name="Ovcharenko I."/>
            <person name="Gordon L."/>
            <person name="Lucas S."/>
            <person name="Miller M.M."/>
            <person name="Inoko H."/>
            <person name="Shiina T."/>
            <person name="Kaufman J."/>
            <person name="Salomonsen J."/>
            <person name="Skjoedt K."/>
            <person name="Wong G.K.-S."/>
            <person name="Wang J."/>
            <person name="Liu B."/>
            <person name="Wang J."/>
            <person name="Yu J."/>
            <person name="Yang H."/>
            <person name="Nefedov M."/>
            <person name="Koriabine M."/>
            <person name="Dejong P.J."/>
            <person name="Goodstadt L."/>
            <person name="Webber C."/>
            <person name="Dickens N.J."/>
            <person name="Letunic I."/>
            <person name="Suyama M."/>
            <person name="Torrents D."/>
            <person name="von Mering C."/>
            <person name="Zdobnov E.M."/>
            <person name="Makova K."/>
            <person name="Nekrutenko A."/>
            <person name="Elnitski L."/>
            <person name="Eswara P."/>
            <person name="King D.C."/>
            <person name="Yang S.-P."/>
            <person name="Tyekucheva S."/>
            <person name="Radakrishnan A."/>
            <person name="Harris R.S."/>
            <person name="Chiaromonte F."/>
            <person name="Taylor J."/>
            <person name="He J."/>
            <person name="Rijnkels M."/>
            <person name="Griffiths-Jones S."/>
            <person name="Ureta-Vidal A."/>
            <person name="Hoffman M.M."/>
            <person name="Severin J."/>
            <person name="Searle S.M.J."/>
            <person name="Law A.S."/>
            <person name="Speed D."/>
            <person name="Waddington D."/>
            <person name="Cheng Z."/>
            <person name="Tuzun E."/>
            <person name="Eichler E."/>
            <person name="Bao Z."/>
            <person name="Flicek P."/>
            <person name="Shteynberg D.D."/>
            <person name="Brent M.R."/>
            <person name="Bye J.M."/>
            <person name="Huckle E.J."/>
            <person name="Chatterji S."/>
            <person name="Dewey C."/>
            <person name="Pachter L."/>
            <person name="Kouranov A."/>
            <person name="Mourelatos Z."/>
            <person name="Hatzigeorgiou A.G."/>
            <person name="Paterson A.H."/>
            <person name="Ivarie R."/>
            <person name="Brandstrom M."/>
            <person name="Axelsson E."/>
            <person name="Backstrom N."/>
            <person name="Berlin S."/>
            <person name="Webster M.T."/>
            <person name="Pourquie O."/>
            <person name="Reymond A."/>
            <person name="Ucla C."/>
            <person name="Antonarakis S.E."/>
            <person name="Long M."/>
            <person name="Emerson J.J."/>
            <person name="Betran E."/>
            <person name="Dupanloup I."/>
            <person name="Kaessmann H."/>
            <person name="Hinrichs A.S."/>
            <person name="Bejerano G."/>
            <person name="Furey T.S."/>
            <person name="Harte R.A."/>
            <person name="Raney B."/>
            <person name="Siepel A."/>
            <person name="Kent W.J."/>
            <person name="Haussler D."/>
            <person name="Eyras E."/>
            <person name="Castelo R."/>
            <person name="Abril J.F."/>
            <person name="Castellano S."/>
            <person name="Camara F."/>
            <person name="Parra G."/>
            <person name="Guigo R."/>
            <person name="Bourque G."/>
            <person name="Tesler G."/>
            <person name="Pevzner P.A."/>
            <person name="Smit A."/>
            <person name="Fulton L.A."/>
            <person name="Mardis E.R."/>
            <person name="Wilson R.K."/>
        </authorList>
    </citation>
    <scope>NUCLEOTIDE SEQUENCE [LARGE SCALE GENOMIC DNA]</scope>
    <source>
        <strain>Red jungle fowl</strain>
    </source>
</reference>